<accession>P47277</accession>
<feature type="chain" id="PRO_0000204582" description="DNA polymerase III PolC-type">
    <location>
        <begin position="1"/>
        <end position="1451"/>
    </location>
</feature>
<feature type="domain" description="Exonuclease">
    <location>
        <begin position="416"/>
        <end position="575"/>
    </location>
</feature>
<keyword id="KW-0963">Cytoplasm</keyword>
<keyword id="KW-0235">DNA replication</keyword>
<keyword id="KW-0239">DNA-directed DNA polymerase</keyword>
<keyword id="KW-0269">Exonuclease</keyword>
<keyword id="KW-0378">Hydrolase</keyword>
<keyword id="KW-0540">Nuclease</keyword>
<keyword id="KW-0548">Nucleotidyltransferase</keyword>
<keyword id="KW-1185">Reference proteome</keyword>
<keyword id="KW-0808">Transferase</keyword>
<dbReference type="EC" id="2.7.7.7" evidence="1"/>
<dbReference type="EMBL" id="L43967">
    <property type="protein sequence ID" value="AAC71247.1"/>
    <property type="molecule type" value="Genomic_DNA"/>
</dbReference>
<dbReference type="EMBL" id="U01807">
    <property type="protein sequence ID" value="AAD12336.1"/>
    <property type="molecule type" value="Genomic_DNA"/>
</dbReference>
<dbReference type="EMBL" id="U01712">
    <property type="protein sequence ID" value="AAC43185.1"/>
    <property type="molecule type" value="Unassigned_DNA"/>
</dbReference>
<dbReference type="EMBL" id="U02208">
    <property type="protein sequence ID" value="AAD12500.1"/>
    <property type="molecule type" value="Genomic_DNA"/>
</dbReference>
<dbReference type="PIR" id="D64203">
    <property type="entry name" value="D64203"/>
</dbReference>
<dbReference type="RefSeq" id="WP_010869296.1">
    <property type="nucleotide sequence ID" value="NC_000908.2"/>
</dbReference>
<dbReference type="SMR" id="P47277"/>
<dbReference type="FunCoup" id="P47277">
    <property type="interactions" value="23"/>
</dbReference>
<dbReference type="STRING" id="243273.MG_031"/>
<dbReference type="GeneID" id="88282146"/>
<dbReference type="KEGG" id="mge:MG_031"/>
<dbReference type="eggNOG" id="COG2176">
    <property type="taxonomic scope" value="Bacteria"/>
</dbReference>
<dbReference type="HOGENOM" id="CLU_003297_1_0_14"/>
<dbReference type="InParanoid" id="P47277"/>
<dbReference type="OrthoDB" id="9804290at2"/>
<dbReference type="BioCyc" id="MGEN243273:G1GJ2-31-MONOMER"/>
<dbReference type="Proteomes" id="UP000000807">
    <property type="component" value="Chromosome"/>
</dbReference>
<dbReference type="GO" id="GO:0005737">
    <property type="term" value="C:cytoplasm"/>
    <property type="evidence" value="ECO:0007669"/>
    <property type="project" value="UniProtKB-SubCell"/>
</dbReference>
<dbReference type="GO" id="GO:0008408">
    <property type="term" value="F:3'-5' exonuclease activity"/>
    <property type="evidence" value="ECO:0007669"/>
    <property type="project" value="UniProtKB-UniRule"/>
</dbReference>
<dbReference type="GO" id="GO:0003677">
    <property type="term" value="F:DNA binding"/>
    <property type="evidence" value="ECO:0007669"/>
    <property type="project" value="UniProtKB-UniRule"/>
</dbReference>
<dbReference type="GO" id="GO:0003887">
    <property type="term" value="F:DNA-directed DNA polymerase activity"/>
    <property type="evidence" value="ECO:0000318"/>
    <property type="project" value="GO_Central"/>
</dbReference>
<dbReference type="GO" id="GO:0006261">
    <property type="term" value="P:DNA-templated DNA replication"/>
    <property type="evidence" value="ECO:0007669"/>
    <property type="project" value="UniProtKB-UniRule"/>
</dbReference>
<dbReference type="CDD" id="cd06127">
    <property type="entry name" value="DEDDh"/>
    <property type="match status" value="1"/>
</dbReference>
<dbReference type="CDD" id="cd04484">
    <property type="entry name" value="polC_OBF"/>
    <property type="match status" value="1"/>
</dbReference>
<dbReference type="FunFam" id="3.30.420.10:FF:000045">
    <property type="entry name" value="3'-5' exonuclease DinG"/>
    <property type="match status" value="1"/>
</dbReference>
<dbReference type="Gene3D" id="1.10.150.870">
    <property type="match status" value="1"/>
</dbReference>
<dbReference type="Gene3D" id="3.30.1900.20">
    <property type="match status" value="2"/>
</dbReference>
<dbReference type="Gene3D" id="3.20.20.140">
    <property type="entry name" value="Metal-dependent hydrolases"/>
    <property type="match status" value="1"/>
</dbReference>
<dbReference type="Gene3D" id="2.40.50.140">
    <property type="entry name" value="Nucleic acid-binding proteins"/>
    <property type="match status" value="1"/>
</dbReference>
<dbReference type="Gene3D" id="1.10.150.700">
    <property type="entry name" value="PolC, middle finger domain"/>
    <property type="match status" value="2"/>
</dbReference>
<dbReference type="Gene3D" id="3.30.420.10">
    <property type="entry name" value="Ribonuclease H-like superfamily/Ribonuclease H"/>
    <property type="match status" value="1"/>
</dbReference>
<dbReference type="HAMAP" id="MF_00356">
    <property type="entry name" value="DNApol_PolC"/>
    <property type="match status" value="1"/>
</dbReference>
<dbReference type="InterPro" id="IPR011708">
    <property type="entry name" value="DNA_pol3_alpha_NTPase_dom"/>
</dbReference>
<dbReference type="InterPro" id="IPR040982">
    <property type="entry name" value="DNA_pol3_finger"/>
</dbReference>
<dbReference type="InterPro" id="IPR004805">
    <property type="entry name" value="DnaE2/DnaE/PolC"/>
</dbReference>
<dbReference type="InterPro" id="IPR029460">
    <property type="entry name" value="DNAPol_HHH"/>
</dbReference>
<dbReference type="InterPro" id="IPR006054">
    <property type="entry name" value="DnaQ"/>
</dbReference>
<dbReference type="InterPro" id="IPR013520">
    <property type="entry name" value="Exonuclease_RNaseT/DNA_pol3"/>
</dbReference>
<dbReference type="InterPro" id="IPR012340">
    <property type="entry name" value="NA-bd_OB-fold"/>
</dbReference>
<dbReference type="InterPro" id="IPR004013">
    <property type="entry name" value="PHP_dom"/>
</dbReference>
<dbReference type="InterPro" id="IPR003141">
    <property type="entry name" value="Pol/His_phosphatase_N"/>
</dbReference>
<dbReference type="InterPro" id="IPR006308">
    <property type="entry name" value="Pol_III_a_PolC-type_gram_pos"/>
</dbReference>
<dbReference type="InterPro" id="IPR044923">
    <property type="entry name" value="PolC_middle_finger_sf"/>
</dbReference>
<dbReference type="InterPro" id="IPR012337">
    <property type="entry name" value="RNaseH-like_sf"/>
</dbReference>
<dbReference type="InterPro" id="IPR036397">
    <property type="entry name" value="RNaseH_sf"/>
</dbReference>
<dbReference type="NCBIfam" id="TIGR00573">
    <property type="entry name" value="dnaq"/>
    <property type="match status" value="1"/>
</dbReference>
<dbReference type="NCBIfam" id="TIGR01405">
    <property type="entry name" value="polC_Gram_pos"/>
    <property type="match status" value="1"/>
</dbReference>
<dbReference type="NCBIfam" id="NF001688">
    <property type="entry name" value="PRK00448.1"/>
    <property type="match status" value="1"/>
</dbReference>
<dbReference type="PANTHER" id="PTHR32294:SF5">
    <property type="entry name" value="DNA POLYMERASE III POLC-TYPE"/>
    <property type="match status" value="1"/>
</dbReference>
<dbReference type="PANTHER" id="PTHR32294">
    <property type="entry name" value="DNA POLYMERASE III SUBUNIT ALPHA"/>
    <property type="match status" value="1"/>
</dbReference>
<dbReference type="Pfam" id="PF07733">
    <property type="entry name" value="DNA_pol3_alpha"/>
    <property type="match status" value="1"/>
</dbReference>
<dbReference type="Pfam" id="PF17657">
    <property type="entry name" value="DNA_pol3_finger"/>
    <property type="match status" value="1"/>
</dbReference>
<dbReference type="Pfam" id="PF14579">
    <property type="entry name" value="HHH_6"/>
    <property type="match status" value="1"/>
</dbReference>
<dbReference type="Pfam" id="PF02811">
    <property type="entry name" value="PHP"/>
    <property type="match status" value="1"/>
</dbReference>
<dbReference type="Pfam" id="PF00929">
    <property type="entry name" value="RNase_T"/>
    <property type="match status" value="1"/>
</dbReference>
<dbReference type="SMART" id="SM00479">
    <property type="entry name" value="EXOIII"/>
    <property type="match status" value="1"/>
</dbReference>
<dbReference type="SMART" id="SM00481">
    <property type="entry name" value="POLIIIAc"/>
    <property type="match status" value="1"/>
</dbReference>
<dbReference type="SUPFAM" id="SSF160975">
    <property type="entry name" value="AF1531-like"/>
    <property type="match status" value="1"/>
</dbReference>
<dbReference type="SUPFAM" id="SSF53098">
    <property type="entry name" value="Ribonuclease H-like"/>
    <property type="match status" value="1"/>
</dbReference>
<protein>
    <recommendedName>
        <fullName evidence="1">DNA polymerase III PolC-type</fullName>
        <shortName evidence="1">PolIII</shortName>
        <ecNumber evidence="1">2.7.7.7</ecNumber>
    </recommendedName>
</protein>
<gene>
    <name evidence="1" type="primary">polC</name>
    <name type="ordered locus">MG031</name>
</gene>
<reference key="1">
    <citation type="journal article" date="1995" name="Science">
        <title>The minimal gene complement of Mycoplasma genitalium.</title>
        <authorList>
            <person name="Fraser C.M."/>
            <person name="Gocayne J.D."/>
            <person name="White O."/>
            <person name="Adams M.D."/>
            <person name="Clayton R.A."/>
            <person name="Fleischmann R.D."/>
            <person name="Bult C.J."/>
            <person name="Kerlavage A.R."/>
            <person name="Sutton G.G."/>
            <person name="Kelley J.M."/>
            <person name="Fritchman J.L."/>
            <person name="Weidman J.F."/>
            <person name="Small K.V."/>
            <person name="Sandusky M."/>
            <person name="Fuhrmann J.L."/>
            <person name="Nguyen D.T."/>
            <person name="Utterback T.R."/>
            <person name="Saudek D.M."/>
            <person name="Phillips C.A."/>
            <person name="Merrick J.M."/>
            <person name="Tomb J.-F."/>
            <person name="Dougherty B.A."/>
            <person name="Bott K.F."/>
            <person name="Hu P.-C."/>
            <person name="Lucier T.S."/>
            <person name="Peterson S.N."/>
            <person name="Smith H.O."/>
            <person name="Hutchison C.A. III"/>
            <person name="Venter J.C."/>
        </authorList>
    </citation>
    <scope>NUCLEOTIDE SEQUENCE [LARGE SCALE GENOMIC DNA]</scope>
    <source>
        <strain>ATCC 33530 / DSM 19775 / NCTC 10195 / G37</strain>
    </source>
</reference>
<reference key="2">
    <citation type="journal article" date="1993" name="J. Bacteriol.">
        <title>A survey of the Mycoplasma genitalium genome by using random sequencing.</title>
        <authorList>
            <person name="Peterson S.N."/>
            <person name="Hu P.-C."/>
            <person name="Bott K.F."/>
            <person name="Hutchison C.A. III"/>
        </authorList>
    </citation>
    <scope>NUCLEOTIDE SEQUENCE [GENOMIC DNA] OF 492-567; 975-1103 AND 1111-1225</scope>
    <source>
        <strain>ATCC 33530 / DSM 19775 / NCTC 10195 / G37</strain>
    </source>
</reference>
<comment type="function">
    <text evidence="1">Required for replicative DNA synthesis. This DNA polymerase also exhibits 3' to 5' exonuclease activity.</text>
</comment>
<comment type="catalytic activity">
    <reaction evidence="1">
        <text>DNA(n) + a 2'-deoxyribonucleoside 5'-triphosphate = DNA(n+1) + diphosphate</text>
        <dbReference type="Rhea" id="RHEA:22508"/>
        <dbReference type="Rhea" id="RHEA-COMP:17339"/>
        <dbReference type="Rhea" id="RHEA-COMP:17340"/>
        <dbReference type="ChEBI" id="CHEBI:33019"/>
        <dbReference type="ChEBI" id="CHEBI:61560"/>
        <dbReference type="ChEBI" id="CHEBI:173112"/>
        <dbReference type="EC" id="2.7.7.7"/>
    </reaction>
</comment>
<comment type="subcellular location">
    <subcellularLocation>
        <location evidence="1">Cytoplasm</location>
    </subcellularLocation>
</comment>
<comment type="similarity">
    <text evidence="1">Belongs to the DNA polymerase type-C family. PolC subfamily.</text>
</comment>
<organism>
    <name type="scientific">Mycoplasma genitalium (strain ATCC 33530 / DSM 19775 / NCTC 10195 / G37)</name>
    <name type="common">Mycoplasmoides genitalium</name>
    <dbReference type="NCBI Taxonomy" id="243273"/>
    <lineage>
        <taxon>Bacteria</taxon>
        <taxon>Bacillati</taxon>
        <taxon>Mycoplasmatota</taxon>
        <taxon>Mycoplasmoidales</taxon>
        <taxon>Mycoplasmoidaceae</taxon>
        <taxon>Mycoplasmoides</taxon>
    </lineage>
</organism>
<sequence>MVFNLENEKDKKVLALSNFLIDNNILDHNELNSLIERIESIYFNKYIEEKVFLFAITISRPLTIDIWNALYEGFNELNEGFKADNESFKLTITFKENEPFFKSKNSFSSVTIAIIKDYFHSFFSKDKKYKILIEQELSNPNFLSYENDELKAQCQTKELTEWLVQKSKSFIFWMNNAGFKNFNFIALYPIDKNESKLKVKAVTVSQYDKQFETKVFATEFIPIHKINQQIDDVKIIGQIFELKTHESLTGKKTLNIYVTDFQLGGSLILKWSYTDEKKIEGITIGNWIKAHIQVERDPNTQILYGIVREINPVEIPNNYKRLDLSKQKRVELVFHTKMTAFDGINDIEEYAQFAKERGWKAITVTDKDNIHIYPKFYEVAKKYDLKAIYGLEFNLTDDHIKIVHNPDNTKLSDATFVIFDIETTGLHGRYDDVIEFSARKIKNNSEIDHQQFFLKIDKPIPKTITEITKITDEMLEGGIDQQQGLEKIRNYLDDCVMVAHNGINFDLPFLQTQFEKYNIKPLTNPLIDTLCLSWALNPLFSSHTLSNICSKLKLEFDDERLHRAEYDTEALKKVFFYFKKQLKEMGINTLTEIDQNLNKKCQIDLMKRVFTNTAIVYVKNQRGFQNLYEMLSIALTDHNANRPLVLASSLAKFRKSFLLTENPVQGDIFKAALTKPINELEKAIEKVDFVLISQPNAYLGYTLREGLKKELINDAIKLVIKTATKLKKLVAVASDAYFIHPWENEYYKAIVCAKGLGGKWHRHFNNKEKEQTVPEVFLHTTDEMLKRMSFLGEDIAYKLVVENTNKIVKLLDLNELVPTKNKLYPPVMQDSNQKLIDKTWKQAEKRYGKNLPKLIKERIEKELNAIISNGFGIVFWISHLLVEQSVKDGYFVGPRGSIGSSLIANLIGISEINPLAAHYLCEQCHYFEVSDSVDDGYDLMIRDCPKCHEKASFKGDGHNIPFATFMGFSGDKIPDIDLNFSSEYQAKAHDYVRKLFGVNNTFRAGTIATVAEKTAYGYARNYFEIIKRVDLATTAEIERFKQKLIGIKRTTGQHPGGIMIFPSDHSVYEFTPCGFPADDVESEWKTTHFEYDALGDAILKLDILGQDDPTMLKHLADLTKINPQNIPHFDKNLISMFSSNKPLNLKPGIVDEVTGAVGIPEFGTKFVRKILEQTKPKDFADLIRVSGLSHGKNVWADNAQKLIKSNRLTLRDVIACRDDIMLYLINKGMQAKDAFEIMEKVRKGIKVNAKEVSLMQNCGVEQYWINACLKINYLFPKAHAAAYVLMAWRIAWFKLYHPLSYYACLLSFKLKEHDINGFEKGYEFIKNRLDELNKLYRIKKIKPKEAELLTSYEVYLEMMARNIKLQQISIQNSNARMFVEHNGVLIAPFITIPGMGEAVASSIVEARNEKPFASLNDFKKRTKITKKHVETMEQLQLFDEFEHQDDHKLFN</sequence>
<evidence type="ECO:0000255" key="1">
    <source>
        <dbReference type="HAMAP-Rule" id="MF_00356"/>
    </source>
</evidence>
<name>DPO3_MYCGE</name>
<proteinExistence type="inferred from homology"/>